<gene>
    <name evidence="1" type="primary">rpl40e</name>
    <name type="ordered locus">LS215_2129</name>
</gene>
<proteinExistence type="inferred from homology"/>
<organism>
    <name type="scientific">Saccharolobus islandicus (strain L.S.2.15 / Lassen #1)</name>
    <name type="common">Sulfolobus islandicus</name>
    <dbReference type="NCBI Taxonomy" id="429572"/>
    <lineage>
        <taxon>Archaea</taxon>
        <taxon>Thermoproteota</taxon>
        <taxon>Thermoprotei</taxon>
        <taxon>Sulfolobales</taxon>
        <taxon>Sulfolobaceae</taxon>
        <taxon>Saccharolobus</taxon>
    </lineage>
</organism>
<dbReference type="EMBL" id="CP001399">
    <property type="protein sequence ID" value="ACP36121.1"/>
    <property type="molecule type" value="Genomic_DNA"/>
</dbReference>
<dbReference type="SMR" id="C3MJ34"/>
<dbReference type="KEGG" id="sis:LS215_2129"/>
<dbReference type="HOGENOM" id="CLU_175093_1_0_2"/>
<dbReference type="OrthoDB" id="45138at2157"/>
<dbReference type="Proteomes" id="UP000001747">
    <property type="component" value="Chromosome"/>
</dbReference>
<dbReference type="GO" id="GO:1990904">
    <property type="term" value="C:ribonucleoprotein complex"/>
    <property type="evidence" value="ECO:0007669"/>
    <property type="project" value="UniProtKB-KW"/>
</dbReference>
<dbReference type="GO" id="GO:0005840">
    <property type="term" value="C:ribosome"/>
    <property type="evidence" value="ECO:0007669"/>
    <property type="project" value="UniProtKB-KW"/>
</dbReference>
<dbReference type="GO" id="GO:0003735">
    <property type="term" value="F:structural constituent of ribosome"/>
    <property type="evidence" value="ECO:0007669"/>
    <property type="project" value="InterPro"/>
</dbReference>
<dbReference type="GO" id="GO:0006412">
    <property type="term" value="P:translation"/>
    <property type="evidence" value="ECO:0007669"/>
    <property type="project" value="UniProtKB-UniRule"/>
</dbReference>
<dbReference type="Gene3D" id="4.10.1060.50">
    <property type="match status" value="1"/>
</dbReference>
<dbReference type="HAMAP" id="MF_00788">
    <property type="entry name" value="Ribosomal_eL40"/>
    <property type="match status" value="1"/>
</dbReference>
<dbReference type="InterPro" id="IPR023657">
    <property type="entry name" value="Ribosomal_eL40_arc"/>
</dbReference>
<dbReference type="InterPro" id="IPR001975">
    <property type="entry name" value="Ribosomal_eL40_dom"/>
</dbReference>
<dbReference type="InterPro" id="IPR038587">
    <property type="entry name" value="Ribosomal_eL40_sf"/>
</dbReference>
<dbReference type="InterPro" id="IPR011332">
    <property type="entry name" value="Ribosomal_zn-bd"/>
</dbReference>
<dbReference type="NCBIfam" id="NF003161">
    <property type="entry name" value="PRK04136.1"/>
    <property type="match status" value="1"/>
</dbReference>
<dbReference type="PANTHER" id="PTHR39649">
    <property type="entry name" value="50S RIBOSOMAL PROTEIN L40E"/>
    <property type="match status" value="1"/>
</dbReference>
<dbReference type="PANTHER" id="PTHR39649:SF1">
    <property type="entry name" value="LARGE RIBOSOMAL SUBUNIT PROTEIN EL40"/>
    <property type="match status" value="1"/>
</dbReference>
<dbReference type="Pfam" id="PF01020">
    <property type="entry name" value="Ribosomal_L40e"/>
    <property type="match status" value="1"/>
</dbReference>
<dbReference type="SMART" id="SM01377">
    <property type="entry name" value="Ribosomal_L40e"/>
    <property type="match status" value="1"/>
</dbReference>
<dbReference type="SUPFAM" id="SSF57829">
    <property type="entry name" value="Zn-binding ribosomal proteins"/>
    <property type="match status" value="1"/>
</dbReference>
<name>RL40_SACI2</name>
<evidence type="ECO:0000255" key="1">
    <source>
        <dbReference type="HAMAP-Rule" id="MF_00788"/>
    </source>
</evidence>
<evidence type="ECO:0000305" key="2"/>
<protein>
    <recommendedName>
        <fullName evidence="1">Large ribosomal subunit protein eL40</fullName>
    </recommendedName>
    <alternativeName>
        <fullName evidence="2">50S ribosomal protein L40e</fullName>
    </alternativeName>
</protein>
<comment type="similarity">
    <text evidence="1">Belongs to the eukaryotic ribosomal protein eL40 family.</text>
</comment>
<keyword id="KW-0687">Ribonucleoprotein</keyword>
<keyword id="KW-0689">Ribosomal protein</keyword>
<sequence>MPLTDPAKLQIVQQRVFLKKVCRKCGALNPIRATKCRRCHSTNLRLKKKELPTKKG</sequence>
<reference key="1">
    <citation type="journal article" date="2009" name="Proc. Natl. Acad. Sci. U.S.A.">
        <title>Biogeography of the Sulfolobus islandicus pan-genome.</title>
        <authorList>
            <person name="Reno M.L."/>
            <person name="Held N.L."/>
            <person name="Fields C.J."/>
            <person name="Burke P.V."/>
            <person name="Whitaker R.J."/>
        </authorList>
    </citation>
    <scope>NUCLEOTIDE SEQUENCE [LARGE SCALE GENOMIC DNA]</scope>
    <source>
        <strain>L.S.2.15 / Lassen #1</strain>
    </source>
</reference>
<accession>C3MJ34</accession>
<feature type="chain" id="PRO_1000212950" description="Large ribosomal subunit protein eL40">
    <location>
        <begin position="1"/>
        <end position="56"/>
    </location>
</feature>